<evidence type="ECO:0000255" key="1">
    <source>
        <dbReference type="HAMAP-Rule" id="MF_03035"/>
    </source>
</evidence>
<evidence type="ECO:0000305" key="2"/>
<name>CLP1_KLULA</name>
<protein>
    <recommendedName>
        <fullName evidence="1">mRNA cleavage and polyadenylation factor CLP1</fullName>
    </recommendedName>
</protein>
<proteinExistence type="inferred from homology"/>
<organism>
    <name type="scientific">Kluyveromyces lactis (strain ATCC 8585 / CBS 2359 / DSM 70799 / NBRC 1267 / NRRL Y-1140 / WM37)</name>
    <name type="common">Yeast</name>
    <name type="synonym">Candida sphaerica</name>
    <dbReference type="NCBI Taxonomy" id="284590"/>
    <lineage>
        <taxon>Eukaryota</taxon>
        <taxon>Fungi</taxon>
        <taxon>Dikarya</taxon>
        <taxon>Ascomycota</taxon>
        <taxon>Saccharomycotina</taxon>
        <taxon>Saccharomycetes</taxon>
        <taxon>Saccharomycetales</taxon>
        <taxon>Saccharomycetaceae</taxon>
        <taxon>Kluyveromyces</taxon>
    </lineage>
</organism>
<dbReference type="EMBL" id="CR382123">
    <property type="protein sequence ID" value="CAH01495.1"/>
    <property type="molecule type" value="Genomic_DNA"/>
</dbReference>
<dbReference type="RefSeq" id="XP_452644.1">
    <property type="nucleotide sequence ID" value="XM_452644.1"/>
</dbReference>
<dbReference type="SMR" id="Q6CTU5"/>
<dbReference type="FunCoup" id="Q6CTU5">
    <property type="interactions" value="848"/>
</dbReference>
<dbReference type="STRING" id="284590.Q6CTU5"/>
<dbReference type="PaxDb" id="284590-Q6CTU5"/>
<dbReference type="KEGG" id="kla:KLLA0_C09988g"/>
<dbReference type="eggNOG" id="KOG2749">
    <property type="taxonomic scope" value="Eukaryota"/>
</dbReference>
<dbReference type="HOGENOM" id="CLU_018195_3_0_1"/>
<dbReference type="InParanoid" id="Q6CTU5"/>
<dbReference type="OMA" id="VQYVNCH"/>
<dbReference type="Proteomes" id="UP000000598">
    <property type="component" value="Chromosome C"/>
</dbReference>
<dbReference type="GO" id="GO:0005849">
    <property type="term" value="C:mRNA cleavage factor complex"/>
    <property type="evidence" value="ECO:0007669"/>
    <property type="project" value="UniProtKB-UniRule"/>
</dbReference>
<dbReference type="GO" id="GO:0005524">
    <property type="term" value="F:ATP binding"/>
    <property type="evidence" value="ECO:0007669"/>
    <property type="project" value="UniProtKB-UniRule"/>
</dbReference>
<dbReference type="GO" id="GO:0051731">
    <property type="term" value="F:polynucleotide 5'-hydroxyl-kinase activity"/>
    <property type="evidence" value="ECO:0007669"/>
    <property type="project" value="InterPro"/>
</dbReference>
<dbReference type="GO" id="GO:0031124">
    <property type="term" value="P:mRNA 3'-end processing"/>
    <property type="evidence" value="ECO:0007669"/>
    <property type="project" value="UniProtKB-UniRule"/>
</dbReference>
<dbReference type="GO" id="GO:0006388">
    <property type="term" value="P:tRNA splicing, via endonucleolytic cleavage and ligation"/>
    <property type="evidence" value="ECO:0007669"/>
    <property type="project" value="TreeGrafter"/>
</dbReference>
<dbReference type="Gene3D" id="2.60.120.1030">
    <property type="entry name" value="Clp1, DNA binding domain"/>
    <property type="match status" value="1"/>
</dbReference>
<dbReference type="Gene3D" id="3.40.50.300">
    <property type="entry name" value="P-loop containing nucleotide triphosphate hydrolases"/>
    <property type="match status" value="1"/>
</dbReference>
<dbReference type="Gene3D" id="2.40.30.330">
    <property type="entry name" value="Pre-mRNA cleavage complex subunit Clp1, C-terminal domain"/>
    <property type="match status" value="1"/>
</dbReference>
<dbReference type="HAMAP" id="MF_03035">
    <property type="entry name" value="Clp1"/>
    <property type="match status" value="1"/>
</dbReference>
<dbReference type="InterPro" id="IPR028606">
    <property type="entry name" value="Clp1"/>
</dbReference>
<dbReference type="InterPro" id="IPR045116">
    <property type="entry name" value="Clp1/Grc3"/>
</dbReference>
<dbReference type="InterPro" id="IPR010655">
    <property type="entry name" value="Clp1_C"/>
</dbReference>
<dbReference type="InterPro" id="IPR038238">
    <property type="entry name" value="Clp1_C_sf"/>
</dbReference>
<dbReference type="InterPro" id="IPR032324">
    <property type="entry name" value="Clp1_N"/>
</dbReference>
<dbReference type="InterPro" id="IPR038239">
    <property type="entry name" value="Clp1_N_sf"/>
</dbReference>
<dbReference type="InterPro" id="IPR032319">
    <property type="entry name" value="CLP1_P"/>
</dbReference>
<dbReference type="InterPro" id="IPR027417">
    <property type="entry name" value="P-loop_NTPase"/>
</dbReference>
<dbReference type="PANTHER" id="PTHR12755">
    <property type="entry name" value="CLEAVAGE/POLYADENYLATION FACTOR IA SUBUNIT CLP1P"/>
    <property type="match status" value="1"/>
</dbReference>
<dbReference type="PANTHER" id="PTHR12755:SF6">
    <property type="entry name" value="POLYRIBONUCLEOTIDE 5'-HYDROXYL-KINASE CLP1"/>
    <property type="match status" value="1"/>
</dbReference>
<dbReference type="Pfam" id="PF06807">
    <property type="entry name" value="Clp1"/>
    <property type="match status" value="1"/>
</dbReference>
<dbReference type="Pfam" id="PF16573">
    <property type="entry name" value="CLP1_N"/>
    <property type="match status" value="1"/>
</dbReference>
<dbReference type="Pfam" id="PF16575">
    <property type="entry name" value="CLP1_P"/>
    <property type="match status" value="1"/>
</dbReference>
<dbReference type="SUPFAM" id="SSF52540">
    <property type="entry name" value="P-loop containing nucleoside triphosphate hydrolases"/>
    <property type="match status" value="1"/>
</dbReference>
<gene>
    <name evidence="1" type="primary">CLP1</name>
    <name type="ordered locus">KLLA0C09988g</name>
</gene>
<keyword id="KW-0067">ATP-binding</keyword>
<keyword id="KW-0507">mRNA processing</keyword>
<keyword id="KW-0547">Nucleotide-binding</keyword>
<keyword id="KW-0539">Nucleus</keyword>
<keyword id="KW-1185">Reference proteome</keyword>
<reference key="1">
    <citation type="journal article" date="2004" name="Nature">
        <title>Genome evolution in yeasts.</title>
        <authorList>
            <person name="Dujon B."/>
            <person name="Sherman D."/>
            <person name="Fischer G."/>
            <person name="Durrens P."/>
            <person name="Casaregola S."/>
            <person name="Lafontaine I."/>
            <person name="de Montigny J."/>
            <person name="Marck C."/>
            <person name="Neuveglise C."/>
            <person name="Talla E."/>
            <person name="Goffard N."/>
            <person name="Frangeul L."/>
            <person name="Aigle M."/>
            <person name="Anthouard V."/>
            <person name="Babour A."/>
            <person name="Barbe V."/>
            <person name="Barnay S."/>
            <person name="Blanchin S."/>
            <person name="Beckerich J.-M."/>
            <person name="Beyne E."/>
            <person name="Bleykasten C."/>
            <person name="Boisrame A."/>
            <person name="Boyer J."/>
            <person name="Cattolico L."/>
            <person name="Confanioleri F."/>
            <person name="de Daruvar A."/>
            <person name="Despons L."/>
            <person name="Fabre E."/>
            <person name="Fairhead C."/>
            <person name="Ferry-Dumazet H."/>
            <person name="Groppi A."/>
            <person name="Hantraye F."/>
            <person name="Hennequin C."/>
            <person name="Jauniaux N."/>
            <person name="Joyet P."/>
            <person name="Kachouri R."/>
            <person name="Kerrest A."/>
            <person name="Koszul R."/>
            <person name="Lemaire M."/>
            <person name="Lesur I."/>
            <person name="Ma L."/>
            <person name="Muller H."/>
            <person name="Nicaud J.-M."/>
            <person name="Nikolski M."/>
            <person name="Oztas S."/>
            <person name="Ozier-Kalogeropoulos O."/>
            <person name="Pellenz S."/>
            <person name="Potier S."/>
            <person name="Richard G.-F."/>
            <person name="Straub M.-L."/>
            <person name="Suleau A."/>
            <person name="Swennen D."/>
            <person name="Tekaia F."/>
            <person name="Wesolowski-Louvel M."/>
            <person name="Westhof E."/>
            <person name="Wirth B."/>
            <person name="Zeniou-Meyer M."/>
            <person name="Zivanovic Y."/>
            <person name="Bolotin-Fukuhara M."/>
            <person name="Thierry A."/>
            <person name="Bouchier C."/>
            <person name="Caudron B."/>
            <person name="Scarpelli C."/>
            <person name="Gaillardin C."/>
            <person name="Weissenbach J."/>
            <person name="Wincker P."/>
            <person name="Souciet J.-L."/>
        </authorList>
    </citation>
    <scope>NUCLEOTIDE SEQUENCE [LARGE SCALE GENOMIC DNA]</scope>
    <source>
        <strain>ATCC 8585 / CBS 2359 / DSM 70799 / NBRC 1267 / NRRL Y-1140 / WM37</strain>
    </source>
</reference>
<accession>Q6CTU5</accession>
<sequence length="437" mass="49043">MEFVEFSEVSETTKTSSLPQGHEWTVQVPAGSKLTVIVKYGIAEILGTELANDVPYTFQGVIVNIYAIERSMIEWKCLEELEPKVSENKSYHAYIYNLNFALERLRLSSFNGPRVLIVGNASTGKSSLAQMLCSYALKIRHYQPLLVNLNPQDGVFSLPGSITATPISELLDVESSIWGQSITTGATKLHNKQPLVKNYGLENIRDNRPLYLSTITQLASGVQQRLKNDPIVRRSGVIIDTPKLSHLDTEDWSEVGHMIEQFDINAIVVCAESDDLAIELSEVFRTKIGSIVRIPPPGSIIAIDDIMRRALQRVQIREYFYGTTETVLSPYTMGAGFEELTVFRPRNISEYGEDKKDVDLTVFDKIEVNSSNLQHAIIAITNISRKESQDKLNTASIIGYGLITEVNDSKKKLRVLLPVPSRIPDRAMILTEYRYLE</sequence>
<comment type="function">
    <text evidence="1">Required for endonucleolytic cleavage during polyadenylation-dependent pre-mRNA 3'-end formation.</text>
</comment>
<comment type="subunit">
    <text evidence="1">Component of a pre-mRNA cleavage factor complex. Interacts directly with PCF11.</text>
</comment>
<comment type="subcellular location">
    <subcellularLocation>
        <location evidence="1">Nucleus</location>
    </subcellularLocation>
</comment>
<comment type="similarity">
    <text evidence="1">Belongs to the Clp1 family. Clp1 subfamily.</text>
</comment>
<comment type="caution">
    <text evidence="2">May lack the polyribonucleotide 5'-hydroxyl-kinase and polynucleotide 5'-hydroxyl-kinase activities that are characteristic of the human ortholog.</text>
</comment>
<feature type="chain" id="PRO_0000375206" description="mRNA cleavage and polyadenylation factor CLP1">
    <location>
        <begin position="1"/>
        <end position="437"/>
    </location>
</feature>
<feature type="binding site" evidence="1">
    <location>
        <position position="23"/>
    </location>
    <ligand>
        <name>ATP</name>
        <dbReference type="ChEBI" id="CHEBI:30616"/>
    </ligand>
</feature>
<feature type="binding site" evidence="1">
    <location>
        <begin position="122"/>
        <end position="127"/>
    </location>
    <ligand>
        <name>ATP</name>
        <dbReference type="ChEBI" id="CHEBI:30616"/>
    </ligand>
</feature>